<feature type="chain" id="PRO_0000209665" description="Rhamnulose-1-phosphate aldolase">
    <location>
        <begin position="1"/>
        <end position="273"/>
    </location>
</feature>
<feature type="active site" evidence="1">
    <location>
        <position position="117"/>
    </location>
</feature>
<feature type="binding site" evidence="1">
    <location>
        <position position="140"/>
    </location>
    <ligand>
        <name>Zn(2+)</name>
        <dbReference type="ChEBI" id="CHEBI:29105"/>
    </ligand>
</feature>
<feature type="binding site" evidence="1">
    <location>
        <position position="142"/>
    </location>
    <ligand>
        <name>Zn(2+)</name>
        <dbReference type="ChEBI" id="CHEBI:29105"/>
    </ligand>
</feature>
<feature type="binding site" evidence="1">
    <location>
        <position position="211"/>
    </location>
    <ligand>
        <name>Zn(2+)</name>
        <dbReference type="ChEBI" id="CHEBI:29105"/>
    </ligand>
</feature>
<name>RHAD_LISMO</name>
<evidence type="ECO:0000255" key="1">
    <source>
        <dbReference type="HAMAP-Rule" id="MF_00770"/>
    </source>
</evidence>
<dbReference type="EC" id="4.1.2.19" evidence="1"/>
<dbReference type="EMBL" id="AL591984">
    <property type="protein sequence ID" value="CAD01060.1"/>
    <property type="molecule type" value="Genomic_DNA"/>
</dbReference>
<dbReference type="PIR" id="AF1430">
    <property type="entry name" value="AF1430"/>
</dbReference>
<dbReference type="RefSeq" id="NP_466369.1">
    <property type="nucleotide sequence ID" value="NC_003210.1"/>
</dbReference>
<dbReference type="RefSeq" id="WP_009924506.1">
    <property type="nucleotide sequence ID" value="NZ_CP149495.1"/>
</dbReference>
<dbReference type="SMR" id="Q8Y3I8"/>
<dbReference type="STRING" id="169963.gene:17595565"/>
<dbReference type="PaxDb" id="169963-lmo2847"/>
<dbReference type="EnsemblBacteria" id="CAD01060">
    <property type="protein sequence ID" value="CAD01060"/>
    <property type="gene ID" value="CAD01060"/>
</dbReference>
<dbReference type="GeneID" id="986387"/>
<dbReference type="KEGG" id="lmo:lmo2847"/>
<dbReference type="PATRIC" id="fig|169963.11.peg.2918"/>
<dbReference type="eggNOG" id="COG0235">
    <property type="taxonomic scope" value="Bacteria"/>
</dbReference>
<dbReference type="HOGENOM" id="CLU_076831_0_0_9"/>
<dbReference type="OrthoDB" id="9784634at2"/>
<dbReference type="PhylomeDB" id="Q8Y3I8"/>
<dbReference type="BioCyc" id="LMON169963:LMO2847-MONOMER"/>
<dbReference type="UniPathway" id="UPA00541">
    <property type="reaction ID" value="UER00603"/>
</dbReference>
<dbReference type="Proteomes" id="UP000000817">
    <property type="component" value="Chromosome"/>
</dbReference>
<dbReference type="GO" id="GO:0005829">
    <property type="term" value="C:cytosol"/>
    <property type="evidence" value="ECO:0000318"/>
    <property type="project" value="GO_Central"/>
</dbReference>
<dbReference type="GO" id="GO:0016832">
    <property type="term" value="F:aldehyde-lyase activity"/>
    <property type="evidence" value="ECO:0000318"/>
    <property type="project" value="GO_Central"/>
</dbReference>
<dbReference type="GO" id="GO:0046872">
    <property type="term" value="F:metal ion binding"/>
    <property type="evidence" value="ECO:0007669"/>
    <property type="project" value="UniProtKB-KW"/>
</dbReference>
<dbReference type="GO" id="GO:0008994">
    <property type="term" value="F:rhamnulose-1-phosphate aldolase activity"/>
    <property type="evidence" value="ECO:0007669"/>
    <property type="project" value="UniProtKB-UniRule"/>
</dbReference>
<dbReference type="GO" id="GO:0019323">
    <property type="term" value="P:pentose catabolic process"/>
    <property type="evidence" value="ECO:0000318"/>
    <property type="project" value="GO_Central"/>
</dbReference>
<dbReference type="GO" id="GO:0019301">
    <property type="term" value="P:rhamnose catabolic process"/>
    <property type="evidence" value="ECO:0007669"/>
    <property type="project" value="UniProtKB-UniRule"/>
</dbReference>
<dbReference type="Gene3D" id="3.40.225.10">
    <property type="entry name" value="Class II aldolase/adducin N-terminal domain"/>
    <property type="match status" value="1"/>
</dbReference>
<dbReference type="HAMAP" id="MF_00770">
    <property type="entry name" value="RhaD"/>
    <property type="match status" value="1"/>
</dbReference>
<dbReference type="InterPro" id="IPR050197">
    <property type="entry name" value="Aldolase_class_II_sugar_metab"/>
</dbReference>
<dbReference type="InterPro" id="IPR001303">
    <property type="entry name" value="Aldolase_II/adducin_N"/>
</dbReference>
<dbReference type="InterPro" id="IPR036409">
    <property type="entry name" value="Aldolase_II/adducin_N_sf"/>
</dbReference>
<dbReference type="InterPro" id="IPR013447">
    <property type="entry name" value="Rhamnulose-1-P_Aldolase"/>
</dbReference>
<dbReference type="NCBIfam" id="NF002963">
    <property type="entry name" value="PRK03634.1"/>
    <property type="match status" value="1"/>
</dbReference>
<dbReference type="NCBIfam" id="TIGR02624">
    <property type="entry name" value="rhamnu_1P_ald"/>
    <property type="match status" value="1"/>
</dbReference>
<dbReference type="PANTHER" id="PTHR22789:SF0">
    <property type="entry name" value="3-OXO-TETRONATE 4-PHOSPHATE DECARBOXYLASE-RELATED"/>
    <property type="match status" value="1"/>
</dbReference>
<dbReference type="PANTHER" id="PTHR22789">
    <property type="entry name" value="FUCULOSE PHOSPHATE ALDOLASE"/>
    <property type="match status" value="1"/>
</dbReference>
<dbReference type="Pfam" id="PF00596">
    <property type="entry name" value="Aldolase_II"/>
    <property type="match status" value="1"/>
</dbReference>
<dbReference type="SMART" id="SM01007">
    <property type="entry name" value="Aldolase_II"/>
    <property type="match status" value="1"/>
</dbReference>
<dbReference type="SUPFAM" id="SSF53639">
    <property type="entry name" value="AraD/HMP-PK domain-like"/>
    <property type="match status" value="1"/>
</dbReference>
<sequence>MTKDIMDAVFIKEMAKTTSNLYRLGWDERNGGNITYLLDEKEVAEYLDVKQIIRTIPMDFDGKKLAGKYFLVTGSGKYFKNVEEAPAVNLGVIQVSEDGKAVHLLWGYTDGGLPTSELPAHFMSHIARLSVDPENRVVMHCHATHLLAMTFTHELTERAFTRTLWQMCTECLVVFPEGVGIIPWLVPGTNEIGEATSEKMKENRLIVWPHHGIYGAGQSMDETFGLIETAEKAAEVYTIVMSQGGIKQAITDEQLKALGERFGVEAKAGYLNN</sequence>
<gene>
    <name evidence="1" type="primary">rhaD</name>
    <name type="ordered locus">lmo2847</name>
</gene>
<reference key="1">
    <citation type="journal article" date="2001" name="Science">
        <title>Comparative genomics of Listeria species.</title>
        <authorList>
            <person name="Glaser P."/>
            <person name="Frangeul L."/>
            <person name="Buchrieser C."/>
            <person name="Rusniok C."/>
            <person name="Amend A."/>
            <person name="Baquero F."/>
            <person name="Berche P."/>
            <person name="Bloecker H."/>
            <person name="Brandt P."/>
            <person name="Chakraborty T."/>
            <person name="Charbit A."/>
            <person name="Chetouani F."/>
            <person name="Couve E."/>
            <person name="de Daruvar A."/>
            <person name="Dehoux P."/>
            <person name="Domann E."/>
            <person name="Dominguez-Bernal G."/>
            <person name="Duchaud E."/>
            <person name="Durant L."/>
            <person name="Dussurget O."/>
            <person name="Entian K.-D."/>
            <person name="Fsihi H."/>
            <person name="Garcia-del Portillo F."/>
            <person name="Garrido P."/>
            <person name="Gautier L."/>
            <person name="Goebel W."/>
            <person name="Gomez-Lopez N."/>
            <person name="Hain T."/>
            <person name="Hauf J."/>
            <person name="Jackson D."/>
            <person name="Jones L.-M."/>
            <person name="Kaerst U."/>
            <person name="Kreft J."/>
            <person name="Kuhn M."/>
            <person name="Kunst F."/>
            <person name="Kurapkat G."/>
            <person name="Madueno E."/>
            <person name="Maitournam A."/>
            <person name="Mata Vicente J."/>
            <person name="Ng E."/>
            <person name="Nedjari H."/>
            <person name="Nordsiek G."/>
            <person name="Novella S."/>
            <person name="de Pablos B."/>
            <person name="Perez-Diaz J.-C."/>
            <person name="Purcell R."/>
            <person name="Remmel B."/>
            <person name="Rose M."/>
            <person name="Schlueter T."/>
            <person name="Simoes N."/>
            <person name="Tierrez A."/>
            <person name="Vazquez-Boland J.-A."/>
            <person name="Voss H."/>
            <person name="Wehland J."/>
            <person name="Cossart P."/>
        </authorList>
    </citation>
    <scope>NUCLEOTIDE SEQUENCE [LARGE SCALE GENOMIC DNA]</scope>
    <source>
        <strain>ATCC BAA-679 / EGD-e</strain>
    </source>
</reference>
<keyword id="KW-0963">Cytoplasm</keyword>
<keyword id="KW-0456">Lyase</keyword>
<keyword id="KW-0479">Metal-binding</keyword>
<keyword id="KW-1185">Reference proteome</keyword>
<keyword id="KW-0684">Rhamnose metabolism</keyword>
<keyword id="KW-0862">Zinc</keyword>
<organism>
    <name type="scientific">Listeria monocytogenes serovar 1/2a (strain ATCC BAA-679 / EGD-e)</name>
    <dbReference type="NCBI Taxonomy" id="169963"/>
    <lineage>
        <taxon>Bacteria</taxon>
        <taxon>Bacillati</taxon>
        <taxon>Bacillota</taxon>
        <taxon>Bacilli</taxon>
        <taxon>Bacillales</taxon>
        <taxon>Listeriaceae</taxon>
        <taxon>Listeria</taxon>
    </lineage>
</organism>
<comment type="function">
    <text evidence="1">Catalyzes the reversible cleavage of L-rhamnulose-1-phosphate to dihydroxyacetone phosphate (DHAP) and L-lactaldehyde.</text>
</comment>
<comment type="catalytic activity">
    <reaction evidence="1">
        <text>L-rhamnulose 1-phosphate = (S)-lactaldehyde + dihydroxyacetone phosphate</text>
        <dbReference type="Rhea" id="RHEA:19689"/>
        <dbReference type="ChEBI" id="CHEBI:18041"/>
        <dbReference type="ChEBI" id="CHEBI:57642"/>
        <dbReference type="ChEBI" id="CHEBI:58313"/>
        <dbReference type="EC" id="4.1.2.19"/>
    </reaction>
</comment>
<comment type="cofactor">
    <cofactor evidence="1">
        <name>Zn(2+)</name>
        <dbReference type="ChEBI" id="CHEBI:29105"/>
    </cofactor>
    <text evidence="1">Binds 1 zinc ion per subunit.</text>
</comment>
<comment type="pathway">
    <text evidence="1">Carbohydrate degradation; L-rhamnose degradation; glycerone phosphate from L-rhamnose: step 3/3.</text>
</comment>
<comment type="subcellular location">
    <subcellularLocation>
        <location evidence="1">Cytoplasm</location>
    </subcellularLocation>
</comment>
<comment type="similarity">
    <text evidence="1">Belongs to the aldolase class II family. RhaD subfamily.</text>
</comment>
<protein>
    <recommendedName>
        <fullName evidence="1">Rhamnulose-1-phosphate aldolase</fullName>
        <ecNumber evidence="1">4.1.2.19</ecNumber>
    </recommendedName>
</protein>
<accession>Q8Y3I8</accession>
<proteinExistence type="inferred from homology"/>